<reference key="1">
    <citation type="journal article" date="1986" name="J. Mol. Biol.">
        <title>Gene regulation and evolution in the chorion locus of Bombyx mori. Structural and developmental characterization of four eggshell genes and their flanking DNA regions.</title>
        <authorList>
            <person name="Spoerel N."/>
            <person name="Nguyen H.T."/>
            <person name="Kafatos F.C."/>
        </authorList>
    </citation>
    <scope>NUCLEOTIDE SEQUENCE [GENOMIC DNA]</scope>
    <source>
        <strain>703</strain>
    </source>
</reference>
<protein>
    <recommendedName>
        <fullName>Chorion class A protein L11</fullName>
    </recommendedName>
</protein>
<dbReference type="EMBL" id="X15557">
    <property type="protein sequence ID" value="CAA33565.1"/>
    <property type="molecule type" value="Genomic_DNA"/>
</dbReference>
<dbReference type="PIR" id="A24255">
    <property type="entry name" value="A24255"/>
</dbReference>
<dbReference type="STRING" id="7091.P08826"/>
<dbReference type="InParanoid" id="P08826"/>
<dbReference type="Proteomes" id="UP000005204">
    <property type="component" value="Unassembled WGS sequence"/>
</dbReference>
<dbReference type="GO" id="GO:0042600">
    <property type="term" value="C:egg chorion"/>
    <property type="evidence" value="ECO:0007669"/>
    <property type="project" value="InterPro"/>
</dbReference>
<dbReference type="GO" id="GO:0005213">
    <property type="term" value="F:structural constituent of egg chorion"/>
    <property type="evidence" value="ECO:0007669"/>
    <property type="project" value="InterPro"/>
</dbReference>
<dbReference type="GO" id="GO:0007304">
    <property type="term" value="P:chorion-containing eggshell formation"/>
    <property type="evidence" value="ECO:0007669"/>
    <property type="project" value="InterPro"/>
</dbReference>
<dbReference type="InterPro" id="IPR002635">
    <property type="entry name" value="Chorion"/>
</dbReference>
<dbReference type="Pfam" id="PF01723">
    <property type="entry name" value="Chorion_1"/>
    <property type="match status" value="1"/>
</dbReference>
<evidence type="ECO:0000305" key="1"/>
<organism>
    <name type="scientific">Bombyx mori</name>
    <name type="common">Silk moth</name>
    <dbReference type="NCBI Taxonomy" id="7091"/>
    <lineage>
        <taxon>Eukaryota</taxon>
        <taxon>Metazoa</taxon>
        <taxon>Ecdysozoa</taxon>
        <taxon>Arthropoda</taxon>
        <taxon>Hexapoda</taxon>
        <taxon>Insecta</taxon>
        <taxon>Pterygota</taxon>
        <taxon>Neoptera</taxon>
        <taxon>Endopterygota</taxon>
        <taxon>Lepidoptera</taxon>
        <taxon>Glossata</taxon>
        <taxon>Ditrysia</taxon>
        <taxon>Bombycoidea</taxon>
        <taxon>Bombycidae</taxon>
        <taxon>Bombycinae</taxon>
        <taxon>Bombyx</taxon>
    </lineage>
</organism>
<proteinExistence type="inferred from homology"/>
<name>CHA1_BOMMO</name>
<feature type="signal peptide">
    <location>
        <begin position="1"/>
        <end position="21"/>
    </location>
</feature>
<feature type="chain" id="PRO_0000005374" description="Chorion class A protein L11">
    <location>
        <begin position="22"/>
        <end position="129"/>
    </location>
</feature>
<feature type="region of interest" description="Left arm">
    <location>
        <begin position="22"/>
        <end position="64"/>
    </location>
</feature>
<feature type="region of interest" description="Central domain">
    <location>
        <begin position="65"/>
        <end position="112"/>
    </location>
</feature>
<feature type="region of interest" description="Right arm">
    <location>
        <begin position="113"/>
        <end position="129"/>
    </location>
</feature>
<accession>P08826</accession>
<comment type="function">
    <text>This protein is one of many from the eggshell of the silk moth.</text>
</comment>
<comment type="similarity">
    <text evidence="1">Belongs to the chorion protein family.</text>
</comment>
<sequence>MSTFAFLLLCVQACLIQNVYGQCLGRGLGGCGCGGGLGGYGLGYGLGGYGGGYGYGGYGGGYYGGYGGEGVGNVGVAGVLPVGGVTAVGGRVPIIGGVEFGGPACAGGCVSICGHCAPTCGCGYGGLYY</sequence>
<keyword id="KW-1185">Reference proteome</keyword>
<keyword id="KW-0677">Repeat</keyword>
<keyword id="KW-0732">Signal</keyword>